<keyword id="KW-0067">ATP-binding</keyword>
<keyword id="KW-0966">Cell projection</keyword>
<keyword id="KW-0963">Cytoplasm</keyword>
<keyword id="KW-0903">Direct protein sequencing</keyword>
<keyword id="KW-0238">DNA-binding</keyword>
<keyword id="KW-0418">Kinase</keyword>
<keyword id="KW-0460">Magnesium</keyword>
<keyword id="KW-0479">Metal-binding</keyword>
<keyword id="KW-0546">Nucleotide metabolism</keyword>
<keyword id="KW-0547">Nucleotide-binding</keyword>
<keyword id="KW-0539">Nucleus</keyword>
<keyword id="KW-1185">Reference proteome</keyword>
<keyword id="KW-0804">Transcription</keyword>
<keyword id="KW-0805">Transcription regulation</keyword>
<keyword id="KW-0808">Transferase</keyword>
<feature type="chain" id="PRO_0000137118" description="Nucleoside diphosphate kinase B">
    <location>
        <begin position="1"/>
        <end position="152"/>
    </location>
</feature>
<feature type="region of interest" description="Interaction with AKAP13" evidence="1">
    <location>
        <begin position="1"/>
        <end position="66"/>
    </location>
</feature>
<feature type="active site" description="Pros-phosphohistidine intermediate" evidence="1">
    <location>
        <position position="118"/>
    </location>
</feature>
<feature type="binding site" evidence="1">
    <location>
        <position position="12"/>
    </location>
    <ligand>
        <name>ATP</name>
        <dbReference type="ChEBI" id="CHEBI:30616"/>
    </ligand>
</feature>
<feature type="binding site" evidence="1">
    <location>
        <position position="60"/>
    </location>
    <ligand>
        <name>ATP</name>
        <dbReference type="ChEBI" id="CHEBI:30616"/>
    </ligand>
</feature>
<feature type="binding site" evidence="1">
    <location>
        <position position="88"/>
    </location>
    <ligand>
        <name>ATP</name>
        <dbReference type="ChEBI" id="CHEBI:30616"/>
    </ligand>
</feature>
<feature type="binding site" evidence="1">
    <location>
        <position position="94"/>
    </location>
    <ligand>
        <name>ATP</name>
        <dbReference type="ChEBI" id="CHEBI:30616"/>
    </ligand>
</feature>
<feature type="binding site" evidence="1">
    <location>
        <position position="105"/>
    </location>
    <ligand>
        <name>ATP</name>
        <dbReference type="ChEBI" id="CHEBI:30616"/>
    </ligand>
</feature>
<feature type="binding site" evidence="1">
    <location>
        <position position="115"/>
    </location>
    <ligand>
        <name>ATP</name>
        <dbReference type="ChEBI" id="CHEBI:30616"/>
    </ligand>
</feature>
<evidence type="ECO:0000250" key="1">
    <source>
        <dbReference type="UniProtKB" id="P22392"/>
    </source>
</evidence>
<evidence type="ECO:0000250" key="2">
    <source>
        <dbReference type="UniProtKB" id="P36010"/>
    </source>
</evidence>
<evidence type="ECO:0000269" key="3">
    <source>
    </source>
</evidence>
<evidence type="ECO:0000269" key="4">
    <source>
    </source>
</evidence>
<evidence type="ECO:0000269" key="5">
    <source>
    </source>
</evidence>
<evidence type="ECO:0000305" key="6"/>
<name>NDKB_MOUSE</name>
<organism>
    <name type="scientific">Mus musculus</name>
    <name type="common">Mouse</name>
    <dbReference type="NCBI Taxonomy" id="10090"/>
    <lineage>
        <taxon>Eukaryota</taxon>
        <taxon>Metazoa</taxon>
        <taxon>Chordata</taxon>
        <taxon>Craniata</taxon>
        <taxon>Vertebrata</taxon>
        <taxon>Euteleostomi</taxon>
        <taxon>Mammalia</taxon>
        <taxon>Eutheria</taxon>
        <taxon>Euarchontoglires</taxon>
        <taxon>Glires</taxon>
        <taxon>Rodentia</taxon>
        <taxon>Myomorpha</taxon>
        <taxon>Muroidea</taxon>
        <taxon>Muridae</taxon>
        <taxon>Murinae</taxon>
        <taxon>Mus</taxon>
        <taxon>Mus</taxon>
    </lineage>
</organism>
<reference key="1">
    <citation type="journal article" date="1992" name="FEBS Lett.">
        <title>Molecular cloning and functional expression of the second mouse nm23/NDP kinase gene, nm23-M2.</title>
        <authorList>
            <person name="Urano T."/>
            <person name="Takamiya K."/>
            <person name="Furukawa K."/>
            <person name="Shiku H."/>
        </authorList>
    </citation>
    <scope>NUCLEOTIDE SEQUENCE [MRNA]</scope>
    <source>
        <strain>C57BL/6J</strain>
    </source>
</reference>
<reference key="2">
    <citation type="submission" date="1992-09" db="EMBL/GenBank/DDBJ databases">
        <authorList>
            <person name="Takeshi U."/>
        </authorList>
    </citation>
    <scope>NUCLEOTIDE SEQUENCE [MRNA]</scope>
    <source>
        <strain>C57BL/6J</strain>
    </source>
</reference>
<reference key="3">
    <citation type="journal article" date="2005" name="Science">
        <title>The transcriptional landscape of the mammalian genome.</title>
        <authorList>
            <person name="Carninci P."/>
            <person name="Kasukawa T."/>
            <person name="Katayama S."/>
            <person name="Gough J."/>
            <person name="Frith M.C."/>
            <person name="Maeda N."/>
            <person name="Oyama R."/>
            <person name="Ravasi T."/>
            <person name="Lenhard B."/>
            <person name="Wells C."/>
            <person name="Kodzius R."/>
            <person name="Shimokawa K."/>
            <person name="Bajic V.B."/>
            <person name="Brenner S.E."/>
            <person name="Batalov S."/>
            <person name="Forrest A.R."/>
            <person name="Zavolan M."/>
            <person name="Davis M.J."/>
            <person name="Wilming L.G."/>
            <person name="Aidinis V."/>
            <person name="Allen J.E."/>
            <person name="Ambesi-Impiombato A."/>
            <person name="Apweiler R."/>
            <person name="Aturaliya R.N."/>
            <person name="Bailey T.L."/>
            <person name="Bansal M."/>
            <person name="Baxter L."/>
            <person name="Beisel K.W."/>
            <person name="Bersano T."/>
            <person name="Bono H."/>
            <person name="Chalk A.M."/>
            <person name="Chiu K.P."/>
            <person name="Choudhary V."/>
            <person name="Christoffels A."/>
            <person name="Clutterbuck D.R."/>
            <person name="Crowe M.L."/>
            <person name="Dalla E."/>
            <person name="Dalrymple B.P."/>
            <person name="de Bono B."/>
            <person name="Della Gatta G."/>
            <person name="di Bernardo D."/>
            <person name="Down T."/>
            <person name="Engstrom P."/>
            <person name="Fagiolini M."/>
            <person name="Faulkner G."/>
            <person name="Fletcher C.F."/>
            <person name="Fukushima T."/>
            <person name="Furuno M."/>
            <person name="Futaki S."/>
            <person name="Gariboldi M."/>
            <person name="Georgii-Hemming P."/>
            <person name="Gingeras T.R."/>
            <person name="Gojobori T."/>
            <person name="Green R.E."/>
            <person name="Gustincich S."/>
            <person name="Harbers M."/>
            <person name="Hayashi Y."/>
            <person name="Hensch T.K."/>
            <person name="Hirokawa N."/>
            <person name="Hill D."/>
            <person name="Huminiecki L."/>
            <person name="Iacono M."/>
            <person name="Ikeo K."/>
            <person name="Iwama A."/>
            <person name="Ishikawa T."/>
            <person name="Jakt M."/>
            <person name="Kanapin A."/>
            <person name="Katoh M."/>
            <person name="Kawasawa Y."/>
            <person name="Kelso J."/>
            <person name="Kitamura H."/>
            <person name="Kitano H."/>
            <person name="Kollias G."/>
            <person name="Krishnan S.P."/>
            <person name="Kruger A."/>
            <person name="Kummerfeld S.K."/>
            <person name="Kurochkin I.V."/>
            <person name="Lareau L.F."/>
            <person name="Lazarevic D."/>
            <person name="Lipovich L."/>
            <person name="Liu J."/>
            <person name="Liuni S."/>
            <person name="McWilliam S."/>
            <person name="Madan Babu M."/>
            <person name="Madera M."/>
            <person name="Marchionni L."/>
            <person name="Matsuda H."/>
            <person name="Matsuzawa S."/>
            <person name="Miki H."/>
            <person name="Mignone F."/>
            <person name="Miyake S."/>
            <person name="Morris K."/>
            <person name="Mottagui-Tabar S."/>
            <person name="Mulder N."/>
            <person name="Nakano N."/>
            <person name="Nakauchi H."/>
            <person name="Ng P."/>
            <person name="Nilsson R."/>
            <person name="Nishiguchi S."/>
            <person name="Nishikawa S."/>
            <person name="Nori F."/>
            <person name="Ohara O."/>
            <person name="Okazaki Y."/>
            <person name="Orlando V."/>
            <person name="Pang K.C."/>
            <person name="Pavan W.J."/>
            <person name="Pavesi G."/>
            <person name="Pesole G."/>
            <person name="Petrovsky N."/>
            <person name="Piazza S."/>
            <person name="Reed J."/>
            <person name="Reid J.F."/>
            <person name="Ring B.Z."/>
            <person name="Ringwald M."/>
            <person name="Rost B."/>
            <person name="Ruan Y."/>
            <person name="Salzberg S.L."/>
            <person name="Sandelin A."/>
            <person name="Schneider C."/>
            <person name="Schoenbach C."/>
            <person name="Sekiguchi K."/>
            <person name="Semple C.A."/>
            <person name="Seno S."/>
            <person name="Sessa L."/>
            <person name="Sheng Y."/>
            <person name="Shibata Y."/>
            <person name="Shimada H."/>
            <person name="Shimada K."/>
            <person name="Silva D."/>
            <person name="Sinclair B."/>
            <person name="Sperling S."/>
            <person name="Stupka E."/>
            <person name="Sugiura K."/>
            <person name="Sultana R."/>
            <person name="Takenaka Y."/>
            <person name="Taki K."/>
            <person name="Tammoja K."/>
            <person name="Tan S.L."/>
            <person name="Tang S."/>
            <person name="Taylor M.S."/>
            <person name="Tegner J."/>
            <person name="Teichmann S.A."/>
            <person name="Ueda H.R."/>
            <person name="van Nimwegen E."/>
            <person name="Verardo R."/>
            <person name="Wei C.L."/>
            <person name="Yagi K."/>
            <person name="Yamanishi H."/>
            <person name="Zabarovsky E."/>
            <person name="Zhu S."/>
            <person name="Zimmer A."/>
            <person name="Hide W."/>
            <person name="Bult C."/>
            <person name="Grimmond S.M."/>
            <person name="Teasdale R.D."/>
            <person name="Liu E.T."/>
            <person name="Brusic V."/>
            <person name="Quackenbush J."/>
            <person name="Wahlestedt C."/>
            <person name="Mattick J.S."/>
            <person name="Hume D.A."/>
            <person name="Kai C."/>
            <person name="Sasaki D."/>
            <person name="Tomaru Y."/>
            <person name="Fukuda S."/>
            <person name="Kanamori-Katayama M."/>
            <person name="Suzuki M."/>
            <person name="Aoki J."/>
            <person name="Arakawa T."/>
            <person name="Iida J."/>
            <person name="Imamura K."/>
            <person name="Itoh M."/>
            <person name="Kato T."/>
            <person name="Kawaji H."/>
            <person name="Kawagashira N."/>
            <person name="Kawashima T."/>
            <person name="Kojima M."/>
            <person name="Kondo S."/>
            <person name="Konno H."/>
            <person name="Nakano K."/>
            <person name="Ninomiya N."/>
            <person name="Nishio T."/>
            <person name="Okada M."/>
            <person name="Plessy C."/>
            <person name="Shibata K."/>
            <person name="Shiraki T."/>
            <person name="Suzuki S."/>
            <person name="Tagami M."/>
            <person name="Waki K."/>
            <person name="Watahiki A."/>
            <person name="Okamura-Oho Y."/>
            <person name="Suzuki H."/>
            <person name="Kawai J."/>
            <person name="Hayashizaki Y."/>
        </authorList>
    </citation>
    <scope>NUCLEOTIDE SEQUENCE [LARGE SCALE MRNA]</scope>
    <source>
        <strain>C57BL/6J</strain>
    </source>
</reference>
<reference key="4">
    <citation type="journal article" date="2004" name="Genome Res.">
        <title>The status, quality, and expansion of the NIH full-length cDNA project: the Mammalian Gene Collection (MGC).</title>
        <authorList>
            <consortium name="The MGC Project Team"/>
        </authorList>
    </citation>
    <scope>NUCLEOTIDE SEQUENCE [LARGE SCALE MRNA]</scope>
    <source>
        <strain>C57BL/6J</strain>
        <tissue>Brain</tissue>
        <tissue>Heart</tissue>
    </source>
</reference>
<reference key="5">
    <citation type="submission" date="2007-04" db="UniProtKB">
        <authorList>
            <person name="Lubec G."/>
            <person name="Klug S."/>
            <person name="Kang S.U."/>
        </authorList>
    </citation>
    <scope>PROTEIN SEQUENCE OF 7-26; 57-66 AND 89-143</scope>
    <scope>IDENTIFICATION BY MASS SPECTROMETRY</scope>
    <source>
        <strain>C57BL/6J</strain>
        <tissue>Brain</tissue>
        <tissue>Hippocampus</tissue>
    </source>
</reference>
<reference key="6">
    <citation type="journal article" date="2006" name="J. Biol. Chem.">
        <title>Stomach-specific calpain, nCL-2, localizes in mucus cells and proteolyzes the beta-subunit of coatomer complex, beta-COP.</title>
        <authorList>
            <person name="Hata S."/>
            <person name="Koyama S."/>
            <person name="Kawahara H."/>
            <person name="Doi N."/>
            <person name="Maeda T."/>
            <person name="Toyama-Sorimachi N."/>
            <person name="Abe K."/>
            <person name="Suzuki K."/>
            <person name="Sorimachi H."/>
        </authorList>
    </citation>
    <scope>INTERACTION WITH CAPN8</scope>
    <scope>TISSUE SPECIFICITY</scope>
</reference>
<reference key="7">
    <citation type="journal article" date="2007" name="Biochem. Biophys. Res. Commun.">
        <title>NM23-H2 involves in negative regulation of Diva and Bcl2L10 in apoptosis signaling.</title>
        <authorList>
            <person name="Kang Y."/>
            <person name="Lee D.C."/>
            <person name="Han J."/>
            <person name="Yoon S."/>
            <person name="Won M."/>
            <person name="Yeom J.H."/>
            <person name="Seong M.J."/>
            <person name="Ko J.J."/>
            <person name="Lee K.A."/>
            <person name="Lee K."/>
            <person name="Bae J."/>
        </authorList>
    </citation>
    <scope>INTERACTION WITH BCL2L10</scope>
</reference>
<reference key="8">
    <citation type="journal article" date="2010" name="J. Biol. Chem.">
        <title>Nucleoside diphosphate kinase B knock-out mice have impaired activation of the K+ channel KCa3.1, resulting in defective T cell activation.</title>
        <authorList>
            <person name="Di L."/>
            <person name="Srivastava S."/>
            <person name="Zhdanova O."/>
            <person name="Sun Y."/>
            <person name="Li Z."/>
            <person name="Skolnik E.Y."/>
        </authorList>
    </citation>
    <scope>FUNCTION</scope>
    <scope>DISRUPTION PHENOTYPE</scope>
</reference>
<sequence>MANLERTFIAIKPDGVQRGLVGEIIKRFEQKGFRLVAMKFLRASEEHLKQHYIDLKDRPFFPGLVKYMNSGPVVAMVWEGLNVVKTGRVMLGETNPADSKPGTIRGDFCIQVGRNIIHGSDSVESAEKEIHLWFKPEELIDYKSCAHDWVYE</sequence>
<gene>
    <name type="primary">Nme2</name>
</gene>
<comment type="function">
    <text evidence="1 2 5">Major role in the synthesis of nucleoside triphosphates other than ATP. The ATP gamma phosphate is transferred to the NDP beta phosphate via a ping-pong mechanism, using a phosphorylated active-site intermediate (By similarity). Negatively regulates Rho activity by interacting with AKAP13/LBC. Acts as a transcriptional activator of the MYC gene; binds DNA non-specifically. Binds to both single-stranded guanine- and cytosine-rich strands within the nuclease hypersensitive element (NHE) III(1) region of the MYC gene promoter. Does not bind to duplex NHE III(1). Has G-quadruplex (G4) DNA-binding activity, which is independent of its nucleotide-binding and kinase activity. Binds both folded and unfolded G4 with similar low nanomolar affinities. Stabilizes folded G4s regardless of whether they are prefolded or not. Exhibits histidine protein kinase activity (By similarity).</text>
</comment>
<comment type="catalytic activity">
    <reaction evidence="1">
        <text>a 2'-deoxyribonucleoside 5'-diphosphate + ATP = a 2'-deoxyribonucleoside 5'-triphosphate + ADP</text>
        <dbReference type="Rhea" id="RHEA:44640"/>
        <dbReference type="ChEBI" id="CHEBI:30616"/>
        <dbReference type="ChEBI" id="CHEBI:61560"/>
        <dbReference type="ChEBI" id="CHEBI:73316"/>
        <dbReference type="ChEBI" id="CHEBI:456216"/>
        <dbReference type="EC" id="2.7.4.6"/>
    </reaction>
</comment>
<comment type="catalytic activity">
    <reaction evidence="1">
        <text>a ribonucleoside 5'-diphosphate + ATP = a ribonucleoside 5'-triphosphate + ADP</text>
        <dbReference type="Rhea" id="RHEA:18113"/>
        <dbReference type="ChEBI" id="CHEBI:30616"/>
        <dbReference type="ChEBI" id="CHEBI:57930"/>
        <dbReference type="ChEBI" id="CHEBI:61557"/>
        <dbReference type="ChEBI" id="CHEBI:456216"/>
        <dbReference type="EC" id="2.7.4.6"/>
    </reaction>
</comment>
<comment type="catalytic activity">
    <reaction evidence="1">
        <text>ATP + protein L-histidine = ADP + protein N-phospho-L-histidine.</text>
        <dbReference type="EC" id="2.7.13.3"/>
    </reaction>
</comment>
<comment type="cofactor">
    <cofactor evidence="1">
        <name>Mg(2+)</name>
        <dbReference type="ChEBI" id="CHEBI:18420"/>
    </cofactor>
</comment>
<comment type="subunit">
    <text evidence="1 3 4">Hexamer of two different chains: A and B (A6, A5B, A4B2, A3B3, A2B4, AB5, B6) (By similarity). Interacts with CAPN8 (PubMed:16476741). Interacts with AKAP13 (By similarity). Interacts with ITGB1BP1 (via C-terminal domain region) (By similarity). Interacts with BCL2L10 (PubMed:17532299).</text>
</comment>
<comment type="interaction">
    <interactant intactId="EBI-642573">
        <id>Q01768</id>
    </interactant>
    <interactant intactId="EBI-644224">
        <id>P09055</id>
        <label>Itgb1</label>
    </interactant>
    <organismsDiffer>false</organismsDiffer>
    <experiments>3</experiments>
</comment>
<comment type="subcellular location">
    <subcellularLocation>
        <location evidence="1">Cytoplasm</location>
    </subcellularLocation>
    <subcellularLocation>
        <location evidence="1">Cell projection</location>
        <location evidence="1">Lamellipodium</location>
    </subcellularLocation>
    <subcellularLocation>
        <location evidence="1">Cell projection</location>
        <location evidence="1">Ruffle</location>
    </subcellularLocation>
    <subcellularLocation>
        <location evidence="1">Nucleus</location>
    </subcellularLocation>
    <text evidence="1">Colocalizes with ITGB1 and ITGB1BP1 at the edge or peripheral ruffles and lamellipodia during the early stages of cell spreading on fibronectin or collagen but not on vitronectin or laminin substrates.</text>
</comment>
<comment type="tissue specificity">
    <text evidence="3">Expressed in the base region of the oxyntic and pyloric mucosae.</text>
</comment>
<comment type="disruption phenotype">
    <text evidence="5">Impaired activation of the K(+) channel Kcnn4, resulting in defective T-cell activation.</text>
</comment>
<comment type="similarity">
    <text evidence="6">Belongs to the NDK family.</text>
</comment>
<dbReference type="EC" id="2.7.4.6" evidence="1"/>
<dbReference type="EC" id="2.7.13.3" evidence="1"/>
<dbReference type="EMBL" id="X68193">
    <property type="protein sequence ID" value="CAA48275.1"/>
    <property type="molecule type" value="mRNA"/>
</dbReference>
<dbReference type="EMBL" id="AK012447">
    <property type="protein sequence ID" value="BAB28246.1"/>
    <property type="molecule type" value="mRNA"/>
</dbReference>
<dbReference type="EMBL" id="BC066995">
    <property type="protein sequence ID" value="AAH66995.1"/>
    <property type="molecule type" value="mRNA"/>
</dbReference>
<dbReference type="EMBL" id="BC086892">
    <property type="protein sequence ID" value="AAH86892.1"/>
    <property type="molecule type" value="mRNA"/>
</dbReference>
<dbReference type="EMBL" id="BC086893">
    <property type="protein sequence ID" value="AAH86893.1"/>
    <property type="molecule type" value="mRNA"/>
</dbReference>
<dbReference type="CCDS" id="CCDS25246.1"/>
<dbReference type="PIR" id="S29241">
    <property type="entry name" value="S29241"/>
</dbReference>
<dbReference type="RefSeq" id="NP_001070997.1">
    <property type="nucleotide sequence ID" value="NM_001077529.2"/>
</dbReference>
<dbReference type="RefSeq" id="NP_032731.1">
    <property type="nucleotide sequence ID" value="NM_008705.5"/>
</dbReference>
<dbReference type="SMR" id="Q01768"/>
<dbReference type="BioGRID" id="201789">
    <property type="interactions" value="23"/>
</dbReference>
<dbReference type="FunCoup" id="Q01768">
    <property type="interactions" value="1958"/>
</dbReference>
<dbReference type="IntAct" id="Q01768">
    <property type="interactions" value="10"/>
</dbReference>
<dbReference type="STRING" id="10090.ENSMUSP00000021217"/>
<dbReference type="GlyGen" id="Q01768">
    <property type="glycosylation" value="1 site, 1 O-linked glycan (1 site)"/>
</dbReference>
<dbReference type="iPTMnet" id="Q01768"/>
<dbReference type="PhosphoSitePlus" id="Q01768"/>
<dbReference type="SwissPalm" id="Q01768"/>
<dbReference type="REPRODUCTION-2DPAGE" id="Q01768"/>
<dbReference type="CPTAC" id="non-CPTAC-3595"/>
<dbReference type="jPOST" id="Q01768"/>
<dbReference type="PaxDb" id="10090-ENSMUSP00000021217"/>
<dbReference type="PeptideAtlas" id="Q01768"/>
<dbReference type="ProteomicsDB" id="252935"/>
<dbReference type="Pumba" id="Q01768"/>
<dbReference type="Antibodypedia" id="35045">
    <property type="antibodies" value="411 antibodies from 25 providers"/>
</dbReference>
<dbReference type="DNASU" id="18103"/>
<dbReference type="Ensembl" id="ENSMUST00000021217.11">
    <property type="protein sequence ID" value="ENSMUSP00000021217.5"/>
    <property type="gene ID" value="ENSMUSG00000020857.12"/>
</dbReference>
<dbReference type="Ensembl" id="ENSMUST00000072566.5">
    <property type="protein sequence ID" value="ENSMUSP00000103476.2"/>
    <property type="gene ID" value="ENSMUSG00000020857.12"/>
</dbReference>
<dbReference type="GeneID" id="18103"/>
<dbReference type="KEGG" id="mmu:18103"/>
<dbReference type="UCSC" id="uc007kxs.2">
    <property type="organism name" value="mouse"/>
</dbReference>
<dbReference type="AGR" id="MGI:97356"/>
<dbReference type="CTD" id="4831"/>
<dbReference type="MGI" id="MGI:97356">
    <property type="gene designation" value="Nme2"/>
</dbReference>
<dbReference type="VEuPathDB" id="HostDB:ENSMUSG00000020857"/>
<dbReference type="eggNOG" id="KOG0888">
    <property type="taxonomic scope" value="Eukaryota"/>
</dbReference>
<dbReference type="GeneTree" id="ENSGT00940000161569"/>
<dbReference type="HOGENOM" id="CLU_060216_6_3_1"/>
<dbReference type="InParanoid" id="Q01768"/>
<dbReference type="OMA" id="NIWFKAD"/>
<dbReference type="OrthoDB" id="2162449at2759"/>
<dbReference type="PhylomeDB" id="Q01768"/>
<dbReference type="TreeFam" id="TF106373"/>
<dbReference type="BRENDA" id="2.7.4.6">
    <property type="organism ID" value="3474"/>
</dbReference>
<dbReference type="Reactome" id="R-MMU-499943">
    <property type="pathway name" value="Interconversion of nucleotide di- and triphosphates"/>
</dbReference>
<dbReference type="Reactome" id="R-MMU-6798695">
    <property type="pathway name" value="Neutrophil degranulation"/>
</dbReference>
<dbReference type="Reactome" id="R-MMU-9748787">
    <property type="pathway name" value="Azathioprine ADME"/>
</dbReference>
<dbReference type="Reactome" id="R-MMU-9755088">
    <property type="pathway name" value="Ribavirin ADME"/>
</dbReference>
<dbReference type="BioGRID-ORCS" id="18103">
    <property type="hits" value="7 hits in 50 CRISPR screens"/>
</dbReference>
<dbReference type="ChiTaRS" id="Nme2">
    <property type="organism name" value="mouse"/>
</dbReference>
<dbReference type="PRO" id="PR:Q01768"/>
<dbReference type="Proteomes" id="UP000000589">
    <property type="component" value="Chromosome 11"/>
</dbReference>
<dbReference type="RNAct" id="Q01768">
    <property type="molecule type" value="protein"/>
</dbReference>
<dbReference type="Bgee" id="ENSMUSG00000020857">
    <property type="expression patterns" value="Expressed in right kidney and 104 other cell types or tissues"/>
</dbReference>
<dbReference type="ExpressionAtlas" id="Q01768">
    <property type="expression patterns" value="baseline and differential"/>
</dbReference>
<dbReference type="GO" id="GO:0071944">
    <property type="term" value="C:cell periphery"/>
    <property type="evidence" value="ECO:0000250"/>
    <property type="project" value="UniProtKB"/>
</dbReference>
<dbReference type="GO" id="GO:0005737">
    <property type="term" value="C:cytoplasm"/>
    <property type="evidence" value="ECO:0000250"/>
    <property type="project" value="UniProtKB"/>
</dbReference>
<dbReference type="GO" id="GO:0030027">
    <property type="term" value="C:lamellipodium"/>
    <property type="evidence" value="ECO:0000250"/>
    <property type="project" value="UniProtKB"/>
</dbReference>
<dbReference type="GO" id="GO:0005739">
    <property type="term" value="C:mitochondrion"/>
    <property type="evidence" value="ECO:0007005"/>
    <property type="project" value="MGI"/>
</dbReference>
<dbReference type="GO" id="GO:0043209">
    <property type="term" value="C:myelin sheath"/>
    <property type="evidence" value="ECO:0007005"/>
    <property type="project" value="UniProtKB"/>
</dbReference>
<dbReference type="GO" id="GO:0005634">
    <property type="term" value="C:nucleus"/>
    <property type="evidence" value="ECO:0007669"/>
    <property type="project" value="UniProtKB-SubCell"/>
</dbReference>
<dbReference type="GO" id="GO:0001726">
    <property type="term" value="C:ruffle"/>
    <property type="evidence" value="ECO:0000250"/>
    <property type="project" value="UniProtKB"/>
</dbReference>
<dbReference type="GO" id="GO:0005524">
    <property type="term" value="F:ATP binding"/>
    <property type="evidence" value="ECO:0007669"/>
    <property type="project" value="UniProtKB-KW"/>
</dbReference>
<dbReference type="GO" id="GO:0003677">
    <property type="term" value="F:DNA binding"/>
    <property type="evidence" value="ECO:0000250"/>
    <property type="project" value="UniProtKB"/>
</dbReference>
<dbReference type="GO" id="GO:0051880">
    <property type="term" value="F:G-quadruplex DNA binding"/>
    <property type="evidence" value="ECO:0000250"/>
    <property type="project" value="UniProtKB"/>
</dbReference>
<dbReference type="GO" id="GO:0019003">
    <property type="term" value="F:GDP binding"/>
    <property type="evidence" value="ECO:0007669"/>
    <property type="project" value="Ensembl"/>
</dbReference>
<dbReference type="GO" id="GO:0042802">
    <property type="term" value="F:identical protein binding"/>
    <property type="evidence" value="ECO:0007669"/>
    <property type="project" value="Ensembl"/>
</dbReference>
<dbReference type="GO" id="GO:0046872">
    <property type="term" value="F:metal ion binding"/>
    <property type="evidence" value="ECO:0007669"/>
    <property type="project" value="UniProtKB-KW"/>
</dbReference>
<dbReference type="GO" id="GO:0004550">
    <property type="term" value="F:nucleoside diphosphate kinase activity"/>
    <property type="evidence" value="ECO:0000266"/>
    <property type="project" value="MGI"/>
</dbReference>
<dbReference type="GO" id="GO:0004673">
    <property type="term" value="F:protein histidine kinase activity"/>
    <property type="evidence" value="ECO:0007669"/>
    <property type="project" value="UniProtKB-EC"/>
</dbReference>
<dbReference type="GO" id="GO:0003713">
    <property type="term" value="F:transcription coactivator activity"/>
    <property type="evidence" value="ECO:0007669"/>
    <property type="project" value="Ensembl"/>
</dbReference>
<dbReference type="GO" id="GO:0006241">
    <property type="term" value="P:CTP biosynthetic process"/>
    <property type="evidence" value="ECO:0007669"/>
    <property type="project" value="InterPro"/>
</dbReference>
<dbReference type="GO" id="GO:0006231">
    <property type="term" value="P:dTMP biosynthetic process"/>
    <property type="evidence" value="ECO:0000303"/>
    <property type="project" value="MGI"/>
</dbReference>
<dbReference type="GO" id="GO:0006183">
    <property type="term" value="P:GTP biosynthetic process"/>
    <property type="evidence" value="ECO:0007669"/>
    <property type="project" value="InterPro"/>
</dbReference>
<dbReference type="GO" id="GO:0007229">
    <property type="term" value="P:integrin-mediated signaling pathway"/>
    <property type="evidence" value="ECO:0000250"/>
    <property type="project" value="UniProtKB"/>
</dbReference>
<dbReference type="GO" id="GO:0043066">
    <property type="term" value="P:negative regulation of apoptotic process"/>
    <property type="evidence" value="ECO:0007669"/>
    <property type="project" value="Ensembl"/>
</dbReference>
<dbReference type="GO" id="GO:0045893">
    <property type="term" value="P:positive regulation of DNA-templated transcription"/>
    <property type="evidence" value="ECO:0000250"/>
    <property type="project" value="UniProtKB"/>
</dbReference>
<dbReference type="GO" id="GO:0050679">
    <property type="term" value="P:positive regulation of epithelial cell proliferation"/>
    <property type="evidence" value="ECO:0007669"/>
    <property type="project" value="Ensembl"/>
</dbReference>
<dbReference type="GO" id="GO:0045618">
    <property type="term" value="P:positive regulation of keratinocyte differentiation"/>
    <property type="evidence" value="ECO:0007669"/>
    <property type="project" value="Ensembl"/>
</dbReference>
<dbReference type="GO" id="GO:0045944">
    <property type="term" value="P:positive regulation of transcription by RNA polymerase II"/>
    <property type="evidence" value="ECO:0000250"/>
    <property type="project" value="UniProtKB"/>
</dbReference>
<dbReference type="GO" id="GO:0006228">
    <property type="term" value="P:UTP biosynthetic process"/>
    <property type="evidence" value="ECO:0007669"/>
    <property type="project" value="InterPro"/>
</dbReference>
<dbReference type="CDD" id="cd04413">
    <property type="entry name" value="NDPk_I"/>
    <property type="match status" value="1"/>
</dbReference>
<dbReference type="FunFam" id="3.30.70.141:FF:000015">
    <property type="entry name" value="Nucleoside diphosphate kinase B"/>
    <property type="match status" value="1"/>
</dbReference>
<dbReference type="Gene3D" id="3.30.70.141">
    <property type="entry name" value="Nucleoside diphosphate kinase-like domain"/>
    <property type="match status" value="1"/>
</dbReference>
<dbReference type="HAMAP" id="MF_00451">
    <property type="entry name" value="NDP_kinase"/>
    <property type="match status" value="1"/>
</dbReference>
<dbReference type="InterPro" id="IPR034907">
    <property type="entry name" value="NDK-like_dom"/>
</dbReference>
<dbReference type="InterPro" id="IPR036850">
    <property type="entry name" value="NDK-like_dom_sf"/>
</dbReference>
<dbReference type="InterPro" id="IPR001564">
    <property type="entry name" value="Nucleoside_diP_kinase"/>
</dbReference>
<dbReference type="InterPro" id="IPR023005">
    <property type="entry name" value="Nucleoside_diP_kinase_AS"/>
</dbReference>
<dbReference type="NCBIfam" id="NF001908">
    <property type="entry name" value="PRK00668.1"/>
    <property type="match status" value="1"/>
</dbReference>
<dbReference type="PANTHER" id="PTHR11349">
    <property type="entry name" value="NUCLEOSIDE DIPHOSPHATE KINASE"/>
    <property type="match status" value="1"/>
</dbReference>
<dbReference type="Pfam" id="PF00334">
    <property type="entry name" value="NDK"/>
    <property type="match status" value="1"/>
</dbReference>
<dbReference type="PRINTS" id="PR01243">
    <property type="entry name" value="NUCDPKINASE"/>
</dbReference>
<dbReference type="SMART" id="SM00562">
    <property type="entry name" value="NDK"/>
    <property type="match status" value="1"/>
</dbReference>
<dbReference type="SUPFAM" id="SSF54919">
    <property type="entry name" value="Nucleoside diphosphate kinase, NDK"/>
    <property type="match status" value="1"/>
</dbReference>
<dbReference type="PROSITE" id="PS00469">
    <property type="entry name" value="NDPK"/>
    <property type="match status" value="1"/>
</dbReference>
<dbReference type="PROSITE" id="PS51374">
    <property type="entry name" value="NDPK_LIKE"/>
    <property type="match status" value="1"/>
</dbReference>
<accession>Q01768</accession>
<protein>
    <recommendedName>
        <fullName>Nucleoside diphosphate kinase B</fullName>
        <shortName>NDK B</shortName>
        <shortName>NDP kinase B</shortName>
        <ecNumber evidence="1">2.7.4.6</ecNumber>
    </recommendedName>
    <alternativeName>
        <fullName>Histidine protein kinase NDKB</fullName>
        <ecNumber evidence="1">2.7.13.3</ecNumber>
    </alternativeName>
    <alternativeName>
        <fullName>P18</fullName>
    </alternativeName>
    <alternativeName>
        <fullName>nm23-M2</fullName>
    </alternativeName>
</protein>
<proteinExistence type="evidence at protein level"/>